<proteinExistence type="inferred from homology"/>
<feature type="chain" id="PRO_0000295360" description="PAN2-PAN3 deadenylation complex subunit PAN3">
    <location>
        <begin position="1"/>
        <end position="662"/>
    </location>
</feature>
<feature type="zinc finger region" description="C3H1-type" evidence="1">
    <location>
        <begin position="26"/>
        <end position="55"/>
    </location>
</feature>
<feature type="region of interest" description="Disordered" evidence="2">
    <location>
        <begin position="1"/>
        <end position="26"/>
    </location>
</feature>
<feature type="region of interest" description="Disordered" evidence="2">
    <location>
        <begin position="59"/>
        <end position="131"/>
    </location>
</feature>
<feature type="region of interest" description="Pseudokinase domain" evidence="1">
    <location>
        <begin position="265"/>
        <end position="525"/>
    </location>
</feature>
<feature type="region of interest" description="Knob domain" evidence="1">
    <location>
        <begin position="565"/>
        <end position="662"/>
    </location>
</feature>
<feature type="coiled-coil region" evidence="1">
    <location>
        <begin position="526"/>
        <end position="564"/>
    </location>
</feature>
<feature type="compositionally biased region" description="Polar residues" evidence="2">
    <location>
        <begin position="72"/>
        <end position="85"/>
    </location>
</feature>
<feature type="compositionally biased region" description="Low complexity" evidence="2">
    <location>
        <begin position="86"/>
        <end position="102"/>
    </location>
</feature>
<feature type="compositionally biased region" description="Polar residues" evidence="2">
    <location>
        <begin position="114"/>
        <end position="126"/>
    </location>
</feature>
<feature type="binding site" evidence="1">
    <location>
        <position position="317"/>
    </location>
    <ligand>
        <name>ATP</name>
        <dbReference type="ChEBI" id="CHEBI:30616"/>
    </ligand>
</feature>
<feature type="binding site" evidence="1">
    <location>
        <begin position="366"/>
        <end position="373"/>
    </location>
    <ligand>
        <name>ATP</name>
        <dbReference type="ChEBI" id="CHEBI:30616"/>
    </ligand>
</feature>
<feature type="binding site" evidence="1">
    <location>
        <begin position="425"/>
        <end position="426"/>
    </location>
    <ligand>
        <name>ATP</name>
        <dbReference type="ChEBI" id="CHEBI:30616"/>
    </ligand>
</feature>
<reference key="1">
    <citation type="journal article" date="2005" name="Nature">
        <title>Genome sequencing and analysis of Aspergillus oryzae.</title>
        <authorList>
            <person name="Machida M."/>
            <person name="Asai K."/>
            <person name="Sano M."/>
            <person name="Tanaka T."/>
            <person name="Kumagai T."/>
            <person name="Terai G."/>
            <person name="Kusumoto K."/>
            <person name="Arima T."/>
            <person name="Akita O."/>
            <person name="Kashiwagi Y."/>
            <person name="Abe K."/>
            <person name="Gomi K."/>
            <person name="Horiuchi H."/>
            <person name="Kitamoto K."/>
            <person name="Kobayashi T."/>
            <person name="Takeuchi M."/>
            <person name="Denning D.W."/>
            <person name="Galagan J.E."/>
            <person name="Nierman W.C."/>
            <person name="Yu J."/>
            <person name="Archer D.B."/>
            <person name="Bennett J.W."/>
            <person name="Bhatnagar D."/>
            <person name="Cleveland T.E."/>
            <person name="Fedorova N.D."/>
            <person name="Gotoh O."/>
            <person name="Horikawa H."/>
            <person name="Hosoyama A."/>
            <person name="Ichinomiya M."/>
            <person name="Igarashi R."/>
            <person name="Iwashita K."/>
            <person name="Juvvadi P.R."/>
            <person name="Kato M."/>
            <person name="Kato Y."/>
            <person name="Kin T."/>
            <person name="Kokubun A."/>
            <person name="Maeda H."/>
            <person name="Maeyama N."/>
            <person name="Maruyama J."/>
            <person name="Nagasaki H."/>
            <person name="Nakajima T."/>
            <person name="Oda K."/>
            <person name="Okada K."/>
            <person name="Paulsen I."/>
            <person name="Sakamoto K."/>
            <person name="Sawano T."/>
            <person name="Takahashi M."/>
            <person name="Takase K."/>
            <person name="Terabayashi Y."/>
            <person name="Wortman J.R."/>
            <person name="Yamada O."/>
            <person name="Yamagata Y."/>
            <person name="Anazawa H."/>
            <person name="Hata Y."/>
            <person name="Koide Y."/>
            <person name="Komori T."/>
            <person name="Koyama Y."/>
            <person name="Minetoki T."/>
            <person name="Suharnan S."/>
            <person name="Tanaka A."/>
            <person name="Isono K."/>
            <person name="Kuhara S."/>
            <person name="Ogasawara N."/>
            <person name="Kikuchi H."/>
        </authorList>
    </citation>
    <scope>NUCLEOTIDE SEQUENCE [LARGE SCALE GENOMIC DNA]</scope>
    <source>
        <strain>ATCC 42149 / RIB 40</strain>
    </source>
</reference>
<evidence type="ECO:0000255" key="1">
    <source>
        <dbReference type="HAMAP-Rule" id="MF_03181"/>
    </source>
</evidence>
<evidence type="ECO:0000256" key="2">
    <source>
        <dbReference type="SAM" id="MobiDB-lite"/>
    </source>
</evidence>
<evidence type="ECO:0000305" key="3"/>
<sequence>MASAGKPTLDDSRRATGSPKMKARENAKDTLCRNVTIYGRCRYEDKGCAFNHDPHKVNTTYQSDSRRRLNVDSPSFTPSLLSSNGSSPTTASVTAKKAATISPKAANAAPFQPRNITSRSNTSTPSGRAETMTPDWSVAEVQEFVPQGFDTAHMASLQGNSNGGVPSTSPFDPFVTASNPLSAASAVGPVQANPFAHDTAAAAAALGGAFFAGQSGFQQPVQYHLYAPIGPHSQNTLGYQRNVHDLFLPNDFREELQKKAAATLQTLPNTQLPAQVDYFHSLVPLDLNHQKNATIFGFPSWVYKAQSSKDGNFYALRRLEGFRLTNEKAIRSVQAWKRVCNGSVVTVHDAFTSRSFQDSSLIFVTDYHPLSKTLAEQHLGAGNRFQGRHNTHIPEQVLWGYMTQIANGLKAIHSNGLAARILDPSKVLVTGKNRIRLNACAIMDVVQYDTQRSIAELQRQDLVNFGQLIVTLGANTPSVMHNPTKAMEHFTRAYSPQLKNSVFWLLNGLQKDQDRNIDIFITGISSQLMSTFDSALHLDDELTSDLSRELENGRLVRLVTKLNFVNERPEYEHDRQWSENGERYFLKMFRDYVFHQVDAQGDPVVDLGHVLSCLNKLDAGTDEKITLVSRDEQSCFVVSYKDIKKALESSFQALLKPTRRLH</sequence>
<accession>Q2U0M4</accession>
<comment type="function">
    <text evidence="1">Regulatory subunit of the poly(A)-nuclease (PAN) deadenylation complex, one of two cytoplasmic mRNA deadenylases involved in mRNA turnover. PAN specifically shortens poly(A) tails of RNA and the activity is stimulated by poly(A)-binding protein pab1. PAN deadenylation is followed by rapid degradation of the shortened mRNA tails by the CCR4-NOT complex. Deadenylated mRNAs are then degraded by two alternative mechanisms, namely exosome-mediated 3'-5' exonucleolytic degradation, or deadenylation-dependent mRNA decaping and subsequent 5'-3' exonucleolytic degradation by xrn1. May also be involved in post-transcriptional maturation of mRNA poly(A) tails. pan3 acts as a positive regulator for PAN activity, recruiting the catalytic subunit pan2 to mRNA via its interaction with RNA and with pab1.</text>
</comment>
<comment type="subunit">
    <text evidence="1">Homodimer. Forms a heterotrimer with a catalytic subunit pan2 to form the poly(A)-nuclease (PAN) deadenylation complex. Interacts (via PAM-2 motif) with poly(A)-binding protein pab1 (via PABC domain), conferring substrate specificity of the enzyme complex.</text>
</comment>
<comment type="subcellular location">
    <subcellularLocation>
        <location evidence="1">Cytoplasm</location>
    </subcellularLocation>
</comment>
<comment type="domain">
    <text evidence="1">The N-terminal zinc finger binds to poly(A) RNA.</text>
</comment>
<comment type="domain">
    <text evidence="1">Contains a pseudokinase domain. The protein kinase domain is predicted to be catalytically inactive because some of the residues important for catalytic activity are substituted and it lacks the equivalent of the binding site for a peptide substrate. However, it has retained an ATP-binding site and ATP-binding is required for mRNA degradation, stimulating the activity of the pan2 nuclease in vitro. The nucleotide-binding site is juxtaposed to the RNase active site of pan2 in the complex and may actually bind nucleosides of a poly(A) RNA rather than ATP, feeding the poly(A)-tail to the active site of the deadenylase and thus increasing the efficiency with which this distributive enzyme degrades oligo(A) RNAs.</text>
</comment>
<comment type="domain">
    <text evidence="1">The pseudokinase domain, the coiled-coil (CC), and C-terminal knob domain (CK) form a structural unit (PKC) that forms an extensive high-affinity interaction surface for pan2.</text>
</comment>
<comment type="similarity">
    <text evidence="1">Belongs to the protein kinase superfamily. PAN3 family.</text>
</comment>
<comment type="sequence caution" evidence="3">
    <conflict type="erroneous gene model prediction">
        <sequence resource="EMBL-CDS" id="BAE64891"/>
    </conflict>
</comment>
<gene>
    <name evidence="1" type="primary">pan3</name>
    <name type="ORF">AO090011000380</name>
</gene>
<name>PAN3_ASPOR</name>
<protein>
    <recommendedName>
        <fullName evidence="1">PAN2-PAN3 deadenylation complex subunit PAN3</fullName>
    </recommendedName>
    <alternativeName>
        <fullName evidence="1">PAB1P-dependent poly(A)-specific ribonuclease</fullName>
    </alternativeName>
    <alternativeName>
        <fullName evidence="1">Poly(A)-nuclease deadenylation complex subunit 3</fullName>
        <shortName evidence="1">PAN deadenylation complex subunit 3</shortName>
    </alternativeName>
</protein>
<dbReference type="EMBL" id="BA000055">
    <property type="protein sequence ID" value="BAE64891.1"/>
    <property type="status" value="ALT_SEQ"/>
    <property type="molecule type" value="Genomic_DNA"/>
</dbReference>
<dbReference type="SMR" id="Q2U0M4"/>
<dbReference type="STRING" id="510516.Q2U0M4"/>
<dbReference type="Proteomes" id="UP000006564">
    <property type="component" value="Chromosome 7"/>
</dbReference>
<dbReference type="GO" id="GO:0000932">
    <property type="term" value="C:P-body"/>
    <property type="evidence" value="ECO:0007669"/>
    <property type="project" value="TreeGrafter"/>
</dbReference>
<dbReference type="GO" id="GO:0031251">
    <property type="term" value="C:PAN complex"/>
    <property type="evidence" value="ECO:0007669"/>
    <property type="project" value="UniProtKB-UniRule"/>
</dbReference>
<dbReference type="GO" id="GO:0005524">
    <property type="term" value="F:ATP binding"/>
    <property type="evidence" value="ECO:0007669"/>
    <property type="project" value="UniProtKB-UniRule"/>
</dbReference>
<dbReference type="GO" id="GO:0008143">
    <property type="term" value="F:poly(A) binding"/>
    <property type="evidence" value="ECO:0007669"/>
    <property type="project" value="TreeGrafter"/>
</dbReference>
<dbReference type="GO" id="GO:0004672">
    <property type="term" value="F:protein kinase activity"/>
    <property type="evidence" value="ECO:0007669"/>
    <property type="project" value="InterPro"/>
</dbReference>
<dbReference type="GO" id="GO:0008270">
    <property type="term" value="F:zinc ion binding"/>
    <property type="evidence" value="ECO:0007669"/>
    <property type="project" value="UniProtKB-KW"/>
</dbReference>
<dbReference type="GO" id="GO:0006397">
    <property type="term" value="P:mRNA processing"/>
    <property type="evidence" value="ECO:0007669"/>
    <property type="project" value="UniProtKB-KW"/>
</dbReference>
<dbReference type="GO" id="GO:0000289">
    <property type="term" value="P:nuclear-transcribed mRNA poly(A) tail shortening"/>
    <property type="evidence" value="ECO:0007669"/>
    <property type="project" value="UniProtKB-UniRule"/>
</dbReference>
<dbReference type="FunFam" id="1.10.287.3700:FF:000001">
    <property type="entry name" value="PAN2-PAN3 deadenylation complex subunit PAN3"/>
    <property type="match status" value="1"/>
</dbReference>
<dbReference type="FunFam" id="1.10.510.10:FF:000520">
    <property type="entry name" value="PAN2-PAN3 deadenylation complex subunit PAN3"/>
    <property type="match status" value="1"/>
</dbReference>
<dbReference type="FunFam" id="1.20.5.5160:FF:000002">
    <property type="entry name" value="PAN2-PAN3 deadenylation complex subunit PAN3"/>
    <property type="match status" value="1"/>
</dbReference>
<dbReference type="Gene3D" id="1.10.287.3700">
    <property type="match status" value="1"/>
</dbReference>
<dbReference type="Gene3D" id="1.20.5.5160">
    <property type="match status" value="1"/>
</dbReference>
<dbReference type="Gene3D" id="6.10.250.3160">
    <property type="match status" value="1"/>
</dbReference>
<dbReference type="Gene3D" id="1.10.510.10">
    <property type="entry name" value="Transferase(Phosphotransferase) domain 1"/>
    <property type="match status" value="1"/>
</dbReference>
<dbReference type="HAMAP" id="MF_03181">
    <property type="entry name" value="PAN3"/>
    <property type="match status" value="1"/>
</dbReference>
<dbReference type="InterPro" id="IPR011009">
    <property type="entry name" value="Kinase-like_dom_sf"/>
</dbReference>
<dbReference type="InterPro" id="IPR030844">
    <property type="entry name" value="PAN3"/>
</dbReference>
<dbReference type="InterPro" id="IPR041332">
    <property type="entry name" value="Pan3_PK"/>
</dbReference>
<dbReference type="InterPro" id="IPR000719">
    <property type="entry name" value="Prot_kinase_dom"/>
</dbReference>
<dbReference type="InterPro" id="IPR000571">
    <property type="entry name" value="Znf_CCCH"/>
</dbReference>
<dbReference type="PANTHER" id="PTHR12272">
    <property type="entry name" value="DEADENYLATION COMPLEX SUBUNIT PAN3"/>
    <property type="match status" value="1"/>
</dbReference>
<dbReference type="PANTHER" id="PTHR12272:SF11">
    <property type="entry name" value="PAN2-PAN3 DEADENYLATION COMPLEX SUBUNIT PAN3"/>
    <property type="match status" value="1"/>
</dbReference>
<dbReference type="Pfam" id="PF18101">
    <property type="entry name" value="Pan3_PK"/>
    <property type="match status" value="1"/>
</dbReference>
<dbReference type="SUPFAM" id="SSF56112">
    <property type="entry name" value="Protein kinase-like (PK-like)"/>
    <property type="match status" value="1"/>
</dbReference>
<dbReference type="PROSITE" id="PS50011">
    <property type="entry name" value="PROTEIN_KINASE_DOM"/>
    <property type="match status" value="1"/>
</dbReference>
<dbReference type="PROSITE" id="PS50103">
    <property type="entry name" value="ZF_C3H1"/>
    <property type="match status" value="1"/>
</dbReference>
<organism>
    <name type="scientific">Aspergillus oryzae (strain ATCC 42149 / RIB 40)</name>
    <name type="common">Yellow koji mold</name>
    <dbReference type="NCBI Taxonomy" id="510516"/>
    <lineage>
        <taxon>Eukaryota</taxon>
        <taxon>Fungi</taxon>
        <taxon>Dikarya</taxon>
        <taxon>Ascomycota</taxon>
        <taxon>Pezizomycotina</taxon>
        <taxon>Eurotiomycetes</taxon>
        <taxon>Eurotiomycetidae</taxon>
        <taxon>Eurotiales</taxon>
        <taxon>Aspergillaceae</taxon>
        <taxon>Aspergillus</taxon>
        <taxon>Aspergillus subgen. Circumdati</taxon>
    </lineage>
</organism>
<keyword id="KW-0067">ATP-binding</keyword>
<keyword id="KW-0175">Coiled coil</keyword>
<keyword id="KW-0963">Cytoplasm</keyword>
<keyword id="KW-0479">Metal-binding</keyword>
<keyword id="KW-0507">mRNA processing</keyword>
<keyword id="KW-0547">Nucleotide-binding</keyword>
<keyword id="KW-1185">Reference proteome</keyword>
<keyword id="KW-0862">Zinc</keyword>
<keyword id="KW-0863">Zinc-finger</keyword>